<proteinExistence type="inferred from homology"/>
<accession>A5UH49</accession>
<protein>
    <recommendedName>
        <fullName evidence="1">Large ribosomal subunit protein bL9</fullName>
    </recommendedName>
    <alternativeName>
        <fullName evidence="2">50S ribosomal protein L9</fullName>
    </alternativeName>
</protein>
<keyword id="KW-0687">Ribonucleoprotein</keyword>
<keyword id="KW-0689">Ribosomal protein</keyword>
<keyword id="KW-0694">RNA-binding</keyword>
<keyword id="KW-0699">rRNA-binding</keyword>
<reference key="1">
    <citation type="journal article" date="2007" name="Genome Biol.">
        <title>Characterization and modeling of the Haemophilus influenzae core and supragenomes based on the complete genomic sequences of Rd and 12 clinical nontypeable strains.</title>
        <authorList>
            <person name="Hogg J.S."/>
            <person name="Hu F.Z."/>
            <person name="Janto B."/>
            <person name="Boissy R."/>
            <person name="Hayes J."/>
            <person name="Keefe R."/>
            <person name="Post J.C."/>
            <person name="Ehrlich G.D."/>
        </authorList>
    </citation>
    <scope>NUCLEOTIDE SEQUENCE [LARGE SCALE GENOMIC DNA]</scope>
    <source>
        <strain>PittGG</strain>
    </source>
</reference>
<organism>
    <name type="scientific">Haemophilus influenzae (strain PittGG)</name>
    <dbReference type="NCBI Taxonomy" id="374931"/>
    <lineage>
        <taxon>Bacteria</taxon>
        <taxon>Pseudomonadati</taxon>
        <taxon>Pseudomonadota</taxon>
        <taxon>Gammaproteobacteria</taxon>
        <taxon>Pasteurellales</taxon>
        <taxon>Pasteurellaceae</taxon>
        <taxon>Haemophilus</taxon>
    </lineage>
</organism>
<dbReference type="EMBL" id="CP000672">
    <property type="protein sequence ID" value="ABR00105.1"/>
    <property type="molecule type" value="Genomic_DNA"/>
</dbReference>
<dbReference type="SMR" id="A5UH49"/>
<dbReference type="KEGG" id="hiq:CGSHiGG_05980"/>
<dbReference type="HOGENOM" id="CLU_078938_4_1_6"/>
<dbReference type="Proteomes" id="UP000001990">
    <property type="component" value="Chromosome"/>
</dbReference>
<dbReference type="GO" id="GO:1990904">
    <property type="term" value="C:ribonucleoprotein complex"/>
    <property type="evidence" value="ECO:0007669"/>
    <property type="project" value="UniProtKB-KW"/>
</dbReference>
<dbReference type="GO" id="GO:0005840">
    <property type="term" value="C:ribosome"/>
    <property type="evidence" value="ECO:0007669"/>
    <property type="project" value="UniProtKB-KW"/>
</dbReference>
<dbReference type="GO" id="GO:0019843">
    <property type="term" value="F:rRNA binding"/>
    <property type="evidence" value="ECO:0007669"/>
    <property type="project" value="UniProtKB-UniRule"/>
</dbReference>
<dbReference type="GO" id="GO:0003735">
    <property type="term" value="F:structural constituent of ribosome"/>
    <property type="evidence" value="ECO:0007669"/>
    <property type="project" value="InterPro"/>
</dbReference>
<dbReference type="GO" id="GO:0006412">
    <property type="term" value="P:translation"/>
    <property type="evidence" value="ECO:0007669"/>
    <property type="project" value="UniProtKB-UniRule"/>
</dbReference>
<dbReference type="FunFam" id="3.10.430.100:FF:000001">
    <property type="entry name" value="50S ribosomal protein L9"/>
    <property type="match status" value="1"/>
</dbReference>
<dbReference type="FunFam" id="3.40.5.10:FF:000001">
    <property type="entry name" value="50S ribosomal protein L9"/>
    <property type="match status" value="1"/>
</dbReference>
<dbReference type="Gene3D" id="3.10.430.100">
    <property type="entry name" value="Ribosomal protein L9, C-terminal domain"/>
    <property type="match status" value="1"/>
</dbReference>
<dbReference type="Gene3D" id="3.40.5.10">
    <property type="entry name" value="Ribosomal protein L9, N-terminal domain"/>
    <property type="match status" value="1"/>
</dbReference>
<dbReference type="HAMAP" id="MF_00503">
    <property type="entry name" value="Ribosomal_bL9"/>
    <property type="match status" value="1"/>
</dbReference>
<dbReference type="InterPro" id="IPR000244">
    <property type="entry name" value="Ribosomal_bL9"/>
</dbReference>
<dbReference type="InterPro" id="IPR009027">
    <property type="entry name" value="Ribosomal_bL9/RNase_H1_N"/>
</dbReference>
<dbReference type="InterPro" id="IPR020594">
    <property type="entry name" value="Ribosomal_bL9_bac/chp"/>
</dbReference>
<dbReference type="InterPro" id="IPR020069">
    <property type="entry name" value="Ribosomal_bL9_C"/>
</dbReference>
<dbReference type="InterPro" id="IPR036791">
    <property type="entry name" value="Ribosomal_bL9_C_sf"/>
</dbReference>
<dbReference type="InterPro" id="IPR020070">
    <property type="entry name" value="Ribosomal_bL9_N"/>
</dbReference>
<dbReference type="InterPro" id="IPR036935">
    <property type="entry name" value="Ribosomal_bL9_N_sf"/>
</dbReference>
<dbReference type="NCBIfam" id="TIGR00158">
    <property type="entry name" value="L9"/>
    <property type="match status" value="1"/>
</dbReference>
<dbReference type="PANTHER" id="PTHR21368">
    <property type="entry name" value="50S RIBOSOMAL PROTEIN L9"/>
    <property type="match status" value="1"/>
</dbReference>
<dbReference type="Pfam" id="PF03948">
    <property type="entry name" value="Ribosomal_L9_C"/>
    <property type="match status" value="1"/>
</dbReference>
<dbReference type="Pfam" id="PF01281">
    <property type="entry name" value="Ribosomal_L9_N"/>
    <property type="match status" value="1"/>
</dbReference>
<dbReference type="SUPFAM" id="SSF55658">
    <property type="entry name" value="L9 N-domain-like"/>
    <property type="match status" value="1"/>
</dbReference>
<dbReference type="SUPFAM" id="SSF55653">
    <property type="entry name" value="Ribosomal protein L9 C-domain"/>
    <property type="match status" value="1"/>
</dbReference>
<dbReference type="PROSITE" id="PS00651">
    <property type="entry name" value="RIBOSOMAL_L9"/>
    <property type="match status" value="1"/>
</dbReference>
<gene>
    <name evidence="1" type="primary">rplI</name>
    <name type="ordered locus">CGSHiGG_05980</name>
</gene>
<sequence>MQVILLDKIVHLGQVGDQVNVKSGFARNFLIPQGKAVMATKANIEHFEARRAELEATAAANLAAAQARAAEVTALGSVTIASKAGDEGRLFGAITTRDVAEAVTAAGVKIAKSEVRLPNGPIRTLGDHDVRFQLHGEVFATLDVIVVAE</sequence>
<feature type="chain" id="PRO_1000014787" description="Large ribosomal subunit protein bL9">
    <location>
        <begin position="1"/>
        <end position="149"/>
    </location>
</feature>
<name>RL9_HAEIG</name>
<comment type="function">
    <text evidence="1">Binds to the 23S rRNA.</text>
</comment>
<comment type="similarity">
    <text evidence="1">Belongs to the bacterial ribosomal protein bL9 family.</text>
</comment>
<evidence type="ECO:0000255" key="1">
    <source>
        <dbReference type="HAMAP-Rule" id="MF_00503"/>
    </source>
</evidence>
<evidence type="ECO:0000305" key="2"/>